<feature type="chain" id="PRO_0000345019" description="Striatin-interacting protein homolog">
    <location>
        <begin position="1"/>
        <end position="913"/>
    </location>
</feature>
<feature type="region of interest" description="Disordered" evidence="1">
    <location>
        <begin position="177"/>
        <end position="204"/>
    </location>
</feature>
<feature type="region of interest" description="Disordered" evidence="1">
    <location>
        <begin position="791"/>
        <end position="814"/>
    </location>
</feature>
<feature type="compositionally biased region" description="Low complexity" evidence="1">
    <location>
        <begin position="177"/>
        <end position="188"/>
    </location>
</feature>
<feature type="compositionally biased region" description="Low complexity" evidence="1">
    <location>
        <begin position="195"/>
        <end position="204"/>
    </location>
</feature>
<feature type="compositionally biased region" description="Low complexity" evidence="1">
    <location>
        <begin position="791"/>
        <end position="811"/>
    </location>
</feature>
<reference key="1">
    <citation type="journal article" date="2005" name="Nature">
        <title>The genome of the social amoeba Dictyostelium discoideum.</title>
        <authorList>
            <person name="Eichinger L."/>
            <person name="Pachebat J.A."/>
            <person name="Gloeckner G."/>
            <person name="Rajandream M.A."/>
            <person name="Sucgang R."/>
            <person name="Berriman M."/>
            <person name="Song J."/>
            <person name="Olsen R."/>
            <person name="Szafranski K."/>
            <person name="Xu Q."/>
            <person name="Tunggal B."/>
            <person name="Kummerfeld S."/>
            <person name="Madera M."/>
            <person name="Konfortov B.A."/>
            <person name="Rivero F."/>
            <person name="Bankier A.T."/>
            <person name="Lehmann R."/>
            <person name="Hamlin N."/>
            <person name="Davies R."/>
            <person name="Gaudet P."/>
            <person name="Fey P."/>
            <person name="Pilcher K."/>
            <person name="Chen G."/>
            <person name="Saunders D."/>
            <person name="Sodergren E.J."/>
            <person name="Davis P."/>
            <person name="Kerhornou A."/>
            <person name="Nie X."/>
            <person name="Hall N."/>
            <person name="Anjard C."/>
            <person name="Hemphill L."/>
            <person name="Bason N."/>
            <person name="Farbrother P."/>
            <person name="Desany B."/>
            <person name="Just E."/>
            <person name="Morio T."/>
            <person name="Rost R."/>
            <person name="Churcher C.M."/>
            <person name="Cooper J."/>
            <person name="Haydock S."/>
            <person name="van Driessche N."/>
            <person name="Cronin A."/>
            <person name="Goodhead I."/>
            <person name="Muzny D.M."/>
            <person name="Mourier T."/>
            <person name="Pain A."/>
            <person name="Lu M."/>
            <person name="Harper D."/>
            <person name="Lindsay R."/>
            <person name="Hauser H."/>
            <person name="James K.D."/>
            <person name="Quiles M."/>
            <person name="Madan Babu M."/>
            <person name="Saito T."/>
            <person name="Buchrieser C."/>
            <person name="Wardroper A."/>
            <person name="Felder M."/>
            <person name="Thangavelu M."/>
            <person name="Johnson D."/>
            <person name="Knights A."/>
            <person name="Loulseged H."/>
            <person name="Mungall K.L."/>
            <person name="Oliver K."/>
            <person name="Price C."/>
            <person name="Quail M.A."/>
            <person name="Urushihara H."/>
            <person name="Hernandez J."/>
            <person name="Rabbinowitsch E."/>
            <person name="Steffen D."/>
            <person name="Sanders M."/>
            <person name="Ma J."/>
            <person name="Kohara Y."/>
            <person name="Sharp S."/>
            <person name="Simmonds M.N."/>
            <person name="Spiegler S."/>
            <person name="Tivey A."/>
            <person name="Sugano S."/>
            <person name="White B."/>
            <person name="Walker D."/>
            <person name="Woodward J.R."/>
            <person name="Winckler T."/>
            <person name="Tanaka Y."/>
            <person name="Shaulsky G."/>
            <person name="Schleicher M."/>
            <person name="Weinstock G.M."/>
            <person name="Rosenthal A."/>
            <person name="Cox E.C."/>
            <person name="Chisholm R.L."/>
            <person name="Gibbs R.A."/>
            <person name="Loomis W.F."/>
            <person name="Platzer M."/>
            <person name="Kay R.R."/>
            <person name="Williams J.G."/>
            <person name="Dear P.H."/>
            <person name="Noegel A.A."/>
            <person name="Barrell B.G."/>
            <person name="Kuspa A."/>
        </authorList>
    </citation>
    <scope>NUCLEOTIDE SEQUENCE [LARGE SCALE GENOMIC DNA]</scope>
    <source>
        <strain>AX4</strain>
    </source>
</reference>
<comment type="similarity">
    <text evidence="2">Belongs to the STRIP family.</text>
</comment>
<dbReference type="EMBL" id="AAFI02000120">
    <property type="protein sequence ID" value="EAL63074.1"/>
    <property type="molecule type" value="Genomic_DNA"/>
</dbReference>
<dbReference type="RefSeq" id="XP_636574.1">
    <property type="nucleotide sequence ID" value="XM_631482.1"/>
</dbReference>
<dbReference type="SMR" id="Q54IL2"/>
<dbReference type="FunCoup" id="Q54IL2">
    <property type="interactions" value="32"/>
</dbReference>
<dbReference type="STRING" id="44689.Q54IL2"/>
<dbReference type="PaxDb" id="44689-DDB0266831"/>
<dbReference type="EnsemblProtists" id="EAL63074">
    <property type="protein sequence ID" value="EAL63074"/>
    <property type="gene ID" value="DDB_G0288685"/>
</dbReference>
<dbReference type="GeneID" id="8626747"/>
<dbReference type="KEGG" id="ddi:DDB_G0288685"/>
<dbReference type="dictyBase" id="DDB_G0288685">
    <property type="gene designation" value="fam40"/>
</dbReference>
<dbReference type="VEuPathDB" id="AmoebaDB:DDB_G0288685"/>
<dbReference type="eggNOG" id="KOG3680">
    <property type="taxonomic scope" value="Eukaryota"/>
</dbReference>
<dbReference type="HOGENOM" id="CLU_318691_0_0_1"/>
<dbReference type="InParanoid" id="Q54IL2"/>
<dbReference type="OMA" id="IMYESNA"/>
<dbReference type="PhylomeDB" id="Q54IL2"/>
<dbReference type="PRO" id="PR:Q54IL2"/>
<dbReference type="Proteomes" id="UP000002195">
    <property type="component" value="Chromosome 5"/>
</dbReference>
<dbReference type="GO" id="GO:0005829">
    <property type="term" value="C:cytosol"/>
    <property type="evidence" value="ECO:0000318"/>
    <property type="project" value="GO_Central"/>
</dbReference>
<dbReference type="GO" id="GO:0007010">
    <property type="term" value="P:cytoskeleton organization"/>
    <property type="evidence" value="ECO:0000318"/>
    <property type="project" value="GO_Central"/>
</dbReference>
<dbReference type="InterPro" id="IPR040185">
    <property type="entry name" value="Far11/STRP"/>
</dbReference>
<dbReference type="InterPro" id="IPR021819">
    <property type="entry name" value="Far11/STRP_C"/>
</dbReference>
<dbReference type="InterPro" id="IPR012486">
    <property type="entry name" value="Far11/STRP_N"/>
</dbReference>
<dbReference type="PANTHER" id="PTHR13239:SF4">
    <property type="entry name" value="AT25231P"/>
    <property type="match status" value="1"/>
</dbReference>
<dbReference type="PANTHER" id="PTHR13239">
    <property type="entry name" value="PROTEIN REQUIRED FOR HYPHAL ANASTOMOSIS HAM-2"/>
    <property type="match status" value="1"/>
</dbReference>
<dbReference type="Pfam" id="PF11882">
    <property type="entry name" value="DUF3402"/>
    <property type="match status" value="2"/>
</dbReference>
<dbReference type="Pfam" id="PF07923">
    <property type="entry name" value="N1221"/>
    <property type="match status" value="2"/>
</dbReference>
<dbReference type="SMART" id="SM01293">
    <property type="entry name" value="DUF3402"/>
    <property type="match status" value="1"/>
</dbReference>
<dbReference type="SMART" id="SM01292">
    <property type="entry name" value="N1221"/>
    <property type="match status" value="1"/>
</dbReference>
<name>STRP_DICDI</name>
<organism>
    <name type="scientific">Dictyostelium discoideum</name>
    <name type="common">Social amoeba</name>
    <dbReference type="NCBI Taxonomy" id="44689"/>
    <lineage>
        <taxon>Eukaryota</taxon>
        <taxon>Amoebozoa</taxon>
        <taxon>Evosea</taxon>
        <taxon>Eumycetozoa</taxon>
        <taxon>Dictyostelia</taxon>
        <taxon>Dictyosteliales</taxon>
        <taxon>Dictyosteliaceae</taxon>
        <taxon>Dictyostelium</taxon>
    </lineage>
</organism>
<evidence type="ECO:0000256" key="1">
    <source>
        <dbReference type="SAM" id="MobiDB-lite"/>
    </source>
</evidence>
<evidence type="ECO:0000305" key="2"/>
<keyword id="KW-1185">Reference proteome</keyword>
<proteinExistence type="inferred from homology"/>
<sequence length="913" mass="104539">MDTASISSTSSNSKSSKEQIKYTFTDFDNDIKNEINELYSYSELSILKKSNISNQFYHDLHEYTSKNKWRDLTDIEKIDYLQHLIGFFELSMKGQDNYNRYLLKSRFIWYIAQGVRDETHDRKDQLHQSKLNCILLREINALPIILKTLVLSSQISNETLRNQQQQQQQQQQQQQQQQQQQQQQNENEGSGEGGTNFTTTTTTTTTTTTANTFISHGKRNNIIKNNSGSVSGVIKNINSNGTLSSSMKVNVKRADLLMSILLDIIYLIIINNKDDELFKEEIFESLEGCNNNNNNNNNYNNNILGKNNNNGTNCDNPNLISIILQLLSEFNEIDGNLYPIKKILMVLWKSLTIFMGGLEDLDRLKQERLDNVGYKKGTPKTRSYDISNFIKSTQRYHSQLKSNSVLHKVNTHYLGTPKEYKDVDVFRLPLSLSDSLSVLQTNLYPPEKVRKEIGINYYSFNNNDTITPHTQSDYFYNTSNISSSKKQIKPRILIDNPSNFERFYCMNVSNFSKIVIILLKILLAATPVVKNYTGPINLIAEIVIDQSSPGSSASLVETMQSAIDFLRHKEIISKSTLGILLLIIKHSKFNQHLQFEYLSKIMYESNALVLLYKCLNHESVEKYLFSQNYLNSEEYFNEESLPSSSAASPPPPPIFQPLNCSGSSINSISSGGAGCEGGGANPPPVQLFENYKNLFSTITSLKLIQKVMKHHPSRISSLSASKSANILKKYCSINHPMIRLYSLKVIKNLVPYQTKKWKQINMRIISDIYLEVPIHINDNWLFSHNSAINNNNNNSNNNNNNNNNNSTNNDNGLTDEHEVTLQEKVEEYHRVNYEQWYTNDGLDMCYKNDHSMGIGIFDDLLNSLQLTTEEKQAIENDRLAYIDKDEGSSLIFMNDALEDELLFNKWNIQKPKF</sequence>
<protein>
    <recommendedName>
        <fullName>Striatin-interacting protein homolog</fullName>
    </recommendedName>
</protein>
<accession>Q54IL2</accession>
<gene>
    <name type="primary">fam40</name>
    <name type="ORF">DDB_G0288685</name>
</gene>